<comment type="function">
    <text evidence="1">Catalyzes the hydrolysis of 6-phosphogluconolactone to 6-phosphogluconate.</text>
</comment>
<comment type="catalytic activity">
    <reaction evidence="1">
        <text>6-phospho-D-glucono-1,5-lactone + H2O = 6-phospho-D-gluconate + H(+)</text>
        <dbReference type="Rhea" id="RHEA:12556"/>
        <dbReference type="ChEBI" id="CHEBI:15377"/>
        <dbReference type="ChEBI" id="CHEBI:15378"/>
        <dbReference type="ChEBI" id="CHEBI:57955"/>
        <dbReference type="ChEBI" id="CHEBI:58759"/>
        <dbReference type="EC" id="3.1.1.31"/>
    </reaction>
</comment>
<comment type="pathway">
    <text evidence="1">Carbohydrate degradation; pentose phosphate pathway; D-ribulose 5-phosphate from D-glucose 6-phosphate (oxidative stage): step 2/3.</text>
</comment>
<comment type="similarity">
    <text evidence="1">Belongs to the cycloisomerase 2 family.</text>
</comment>
<feature type="chain" id="PRO_1000148153" description="6-phosphogluconolactonase">
    <location>
        <begin position="1"/>
        <end position="331"/>
    </location>
</feature>
<feature type="modified residue" description="N6-acetyllysine" evidence="1">
    <location>
        <position position="287"/>
    </location>
</feature>
<proteinExistence type="inferred from homology"/>
<name>6PGL_ECO8A</name>
<sequence length="331" mass="36338">MKQTVYIASPESQQIHVWNLNHEGALTLTQVVDVPGQVQPMVVSPDKRYLYVGVRPEFRVLAYRIAPDDGALTFAAESALPGSPTHISTDHQGQFVFVGSYNAGNVSVTRLEDGLPVGVVDVVEGLDGCHSANISPDNRTLWVPALKQDRICLFMVSDDGHLVAQDPAEVTTVEGAGPRHMVFHPNEQYAYCVNELNSSVDVWELKDPHGNIECVQTLDMMPENFSDTRWAADIHITPDGRHLYACDRTASLITVFSVSEDGSVLSKEGFQPTETQPRGFNVDHSGKYLIAAGQKSHHISVYEIVGEQGLLHEKGRYAVGQGPMWVVVNAH</sequence>
<reference key="1">
    <citation type="journal article" date="2009" name="PLoS Genet.">
        <title>Organised genome dynamics in the Escherichia coli species results in highly diverse adaptive paths.</title>
        <authorList>
            <person name="Touchon M."/>
            <person name="Hoede C."/>
            <person name="Tenaillon O."/>
            <person name="Barbe V."/>
            <person name="Baeriswyl S."/>
            <person name="Bidet P."/>
            <person name="Bingen E."/>
            <person name="Bonacorsi S."/>
            <person name="Bouchier C."/>
            <person name="Bouvet O."/>
            <person name="Calteau A."/>
            <person name="Chiapello H."/>
            <person name="Clermont O."/>
            <person name="Cruveiller S."/>
            <person name="Danchin A."/>
            <person name="Diard M."/>
            <person name="Dossat C."/>
            <person name="Karoui M.E."/>
            <person name="Frapy E."/>
            <person name="Garry L."/>
            <person name="Ghigo J.M."/>
            <person name="Gilles A.M."/>
            <person name="Johnson J."/>
            <person name="Le Bouguenec C."/>
            <person name="Lescat M."/>
            <person name="Mangenot S."/>
            <person name="Martinez-Jehanne V."/>
            <person name="Matic I."/>
            <person name="Nassif X."/>
            <person name="Oztas S."/>
            <person name="Petit M.A."/>
            <person name="Pichon C."/>
            <person name="Rouy Z."/>
            <person name="Ruf C.S."/>
            <person name="Schneider D."/>
            <person name="Tourret J."/>
            <person name="Vacherie B."/>
            <person name="Vallenet D."/>
            <person name="Medigue C."/>
            <person name="Rocha E.P.C."/>
            <person name="Denamur E."/>
        </authorList>
    </citation>
    <scope>NUCLEOTIDE SEQUENCE [LARGE SCALE GENOMIC DNA]</scope>
    <source>
        <strain>IAI1</strain>
    </source>
</reference>
<organism>
    <name type="scientific">Escherichia coli O8 (strain IAI1)</name>
    <dbReference type="NCBI Taxonomy" id="585034"/>
    <lineage>
        <taxon>Bacteria</taxon>
        <taxon>Pseudomonadati</taxon>
        <taxon>Pseudomonadota</taxon>
        <taxon>Gammaproteobacteria</taxon>
        <taxon>Enterobacterales</taxon>
        <taxon>Enterobacteriaceae</taxon>
        <taxon>Escherichia</taxon>
    </lineage>
</organism>
<accession>B7M6D0</accession>
<protein>
    <recommendedName>
        <fullName evidence="1">6-phosphogluconolactonase</fullName>
        <shortName evidence="1">6-P-gluconolactonase</shortName>
        <ecNumber evidence="1">3.1.1.31</ecNumber>
    </recommendedName>
</protein>
<evidence type="ECO:0000255" key="1">
    <source>
        <dbReference type="HAMAP-Rule" id="MF_01605"/>
    </source>
</evidence>
<dbReference type="EC" id="3.1.1.31" evidence="1"/>
<dbReference type="EMBL" id="CU928160">
    <property type="protein sequence ID" value="CAQ97602.1"/>
    <property type="molecule type" value="Genomic_DNA"/>
</dbReference>
<dbReference type="RefSeq" id="WP_000815422.1">
    <property type="nucleotide sequence ID" value="NC_011741.1"/>
</dbReference>
<dbReference type="SMR" id="B7M6D0"/>
<dbReference type="KEGG" id="ecr:ECIAI1_0735"/>
<dbReference type="HOGENOM" id="CLU_038716_2_0_6"/>
<dbReference type="UniPathway" id="UPA00115">
    <property type="reaction ID" value="UER00409"/>
</dbReference>
<dbReference type="GO" id="GO:0005829">
    <property type="term" value="C:cytosol"/>
    <property type="evidence" value="ECO:0007669"/>
    <property type="project" value="TreeGrafter"/>
</dbReference>
<dbReference type="GO" id="GO:0017057">
    <property type="term" value="F:6-phosphogluconolactonase activity"/>
    <property type="evidence" value="ECO:0007669"/>
    <property type="project" value="UniProtKB-UniRule"/>
</dbReference>
<dbReference type="GO" id="GO:0006006">
    <property type="term" value="P:glucose metabolic process"/>
    <property type="evidence" value="ECO:0007669"/>
    <property type="project" value="UniProtKB-KW"/>
</dbReference>
<dbReference type="GO" id="GO:0009051">
    <property type="term" value="P:pentose-phosphate shunt, oxidative branch"/>
    <property type="evidence" value="ECO:0007669"/>
    <property type="project" value="UniProtKB-UniRule"/>
</dbReference>
<dbReference type="FunFam" id="2.130.10.10:FF:000051">
    <property type="entry name" value="6-phosphogluconolactonase"/>
    <property type="match status" value="1"/>
</dbReference>
<dbReference type="Gene3D" id="2.130.10.10">
    <property type="entry name" value="YVTN repeat-like/Quinoprotein amine dehydrogenase"/>
    <property type="match status" value="1"/>
</dbReference>
<dbReference type="HAMAP" id="MF_01605">
    <property type="entry name" value="6P_gluconolactonase"/>
    <property type="match status" value="1"/>
</dbReference>
<dbReference type="InterPro" id="IPR022528">
    <property type="entry name" value="6-phosphogluconolactonase_YbhE"/>
</dbReference>
<dbReference type="InterPro" id="IPR050282">
    <property type="entry name" value="Cycloisomerase_2"/>
</dbReference>
<dbReference type="InterPro" id="IPR019405">
    <property type="entry name" value="Lactonase_7-beta_prop"/>
</dbReference>
<dbReference type="InterPro" id="IPR011045">
    <property type="entry name" value="N2O_reductase_N"/>
</dbReference>
<dbReference type="InterPro" id="IPR015943">
    <property type="entry name" value="WD40/YVTN_repeat-like_dom_sf"/>
</dbReference>
<dbReference type="NCBIfam" id="NF008258">
    <property type="entry name" value="PRK11028.1"/>
    <property type="match status" value="1"/>
</dbReference>
<dbReference type="PANTHER" id="PTHR30344:SF1">
    <property type="entry name" value="6-PHOSPHOGLUCONOLACTONASE"/>
    <property type="match status" value="1"/>
</dbReference>
<dbReference type="PANTHER" id="PTHR30344">
    <property type="entry name" value="6-PHOSPHOGLUCONOLACTONASE-RELATED"/>
    <property type="match status" value="1"/>
</dbReference>
<dbReference type="Pfam" id="PF10282">
    <property type="entry name" value="Lactonase"/>
    <property type="match status" value="1"/>
</dbReference>
<dbReference type="SUPFAM" id="SSF50974">
    <property type="entry name" value="Nitrous oxide reductase, N-terminal domain"/>
    <property type="match status" value="1"/>
</dbReference>
<keyword id="KW-0007">Acetylation</keyword>
<keyword id="KW-0119">Carbohydrate metabolism</keyword>
<keyword id="KW-0313">Glucose metabolism</keyword>
<keyword id="KW-0378">Hydrolase</keyword>
<gene>
    <name evidence="1" type="primary">pgl</name>
    <name type="ordered locus">ECIAI1_0735</name>
</gene>